<organism>
    <name type="scientific">Brucella ovis (strain ATCC 25840 / 63/290 / NCTC 10512)</name>
    <dbReference type="NCBI Taxonomy" id="444178"/>
    <lineage>
        <taxon>Bacteria</taxon>
        <taxon>Pseudomonadati</taxon>
        <taxon>Pseudomonadota</taxon>
        <taxon>Alphaproteobacteria</taxon>
        <taxon>Hyphomicrobiales</taxon>
        <taxon>Brucellaceae</taxon>
        <taxon>Brucella/Ochrobactrum group</taxon>
        <taxon>Brucella</taxon>
    </lineage>
</organism>
<keyword id="KW-0687">Ribonucleoprotein</keyword>
<keyword id="KW-0689">Ribosomal protein</keyword>
<keyword id="KW-0694">RNA-binding</keyword>
<keyword id="KW-0699">rRNA-binding</keyword>
<comment type="function">
    <text evidence="1">One of the primary rRNA binding proteins, this protein initially binds near the 5'-end of the 23S rRNA. It is important during the early stages of 50S assembly. It makes multiple contacts with different domains of the 23S rRNA in the assembled 50S subunit and ribosome.</text>
</comment>
<comment type="function">
    <text evidence="1">Forms part of the polypeptide exit tunnel.</text>
</comment>
<comment type="subunit">
    <text evidence="1">Part of the 50S ribosomal subunit.</text>
</comment>
<comment type="similarity">
    <text evidence="1">Belongs to the universal ribosomal protein uL4 family.</text>
</comment>
<dbReference type="EMBL" id="CP000708">
    <property type="protein sequence ID" value="ABQ60638.1"/>
    <property type="molecule type" value="Genomic_DNA"/>
</dbReference>
<dbReference type="RefSeq" id="WP_002964361.1">
    <property type="nucleotide sequence ID" value="NC_009505.1"/>
</dbReference>
<dbReference type="SMR" id="A5VR05"/>
<dbReference type="GeneID" id="93016440"/>
<dbReference type="KEGG" id="bov:BOV_1195"/>
<dbReference type="HOGENOM" id="CLU_041575_5_1_5"/>
<dbReference type="PhylomeDB" id="A5VR05"/>
<dbReference type="Proteomes" id="UP000006383">
    <property type="component" value="Chromosome I"/>
</dbReference>
<dbReference type="GO" id="GO:1990904">
    <property type="term" value="C:ribonucleoprotein complex"/>
    <property type="evidence" value="ECO:0007669"/>
    <property type="project" value="UniProtKB-KW"/>
</dbReference>
<dbReference type="GO" id="GO:0005840">
    <property type="term" value="C:ribosome"/>
    <property type="evidence" value="ECO:0007669"/>
    <property type="project" value="UniProtKB-KW"/>
</dbReference>
<dbReference type="GO" id="GO:0019843">
    <property type="term" value="F:rRNA binding"/>
    <property type="evidence" value="ECO:0007669"/>
    <property type="project" value="UniProtKB-UniRule"/>
</dbReference>
<dbReference type="GO" id="GO:0003735">
    <property type="term" value="F:structural constituent of ribosome"/>
    <property type="evidence" value="ECO:0007669"/>
    <property type="project" value="InterPro"/>
</dbReference>
<dbReference type="GO" id="GO:0006412">
    <property type="term" value="P:translation"/>
    <property type="evidence" value="ECO:0007669"/>
    <property type="project" value="UniProtKB-UniRule"/>
</dbReference>
<dbReference type="Gene3D" id="3.40.1370.10">
    <property type="match status" value="1"/>
</dbReference>
<dbReference type="HAMAP" id="MF_01328_B">
    <property type="entry name" value="Ribosomal_uL4_B"/>
    <property type="match status" value="1"/>
</dbReference>
<dbReference type="InterPro" id="IPR002136">
    <property type="entry name" value="Ribosomal_uL4"/>
</dbReference>
<dbReference type="InterPro" id="IPR013005">
    <property type="entry name" value="Ribosomal_uL4-like"/>
</dbReference>
<dbReference type="InterPro" id="IPR023574">
    <property type="entry name" value="Ribosomal_uL4_dom_sf"/>
</dbReference>
<dbReference type="NCBIfam" id="TIGR03953">
    <property type="entry name" value="rplD_bact"/>
    <property type="match status" value="1"/>
</dbReference>
<dbReference type="PANTHER" id="PTHR10746">
    <property type="entry name" value="50S RIBOSOMAL PROTEIN L4"/>
    <property type="match status" value="1"/>
</dbReference>
<dbReference type="PANTHER" id="PTHR10746:SF6">
    <property type="entry name" value="LARGE RIBOSOMAL SUBUNIT PROTEIN UL4M"/>
    <property type="match status" value="1"/>
</dbReference>
<dbReference type="Pfam" id="PF00573">
    <property type="entry name" value="Ribosomal_L4"/>
    <property type="match status" value="1"/>
</dbReference>
<dbReference type="SUPFAM" id="SSF52166">
    <property type="entry name" value="Ribosomal protein L4"/>
    <property type="match status" value="1"/>
</dbReference>
<evidence type="ECO:0000255" key="1">
    <source>
        <dbReference type="HAMAP-Rule" id="MF_01328"/>
    </source>
</evidence>
<evidence type="ECO:0000256" key="2">
    <source>
        <dbReference type="SAM" id="MobiDB-lite"/>
    </source>
</evidence>
<evidence type="ECO:0000305" key="3"/>
<proteinExistence type="inferred from homology"/>
<protein>
    <recommendedName>
        <fullName evidence="1">Large ribosomal subunit protein uL4</fullName>
    </recommendedName>
    <alternativeName>
        <fullName evidence="3">50S ribosomal protein L4</fullName>
    </alternativeName>
</protein>
<name>RL4_BRUO2</name>
<feature type="chain" id="PRO_1000052362" description="Large ribosomal subunit protein uL4">
    <location>
        <begin position="1"/>
        <end position="206"/>
    </location>
</feature>
<feature type="region of interest" description="Disordered" evidence="2">
    <location>
        <begin position="42"/>
        <end position="94"/>
    </location>
</feature>
<feature type="compositionally biased region" description="Basic residues" evidence="2">
    <location>
        <begin position="64"/>
        <end position="77"/>
    </location>
</feature>
<sequence>MDLTITTLEGKDAGKVKLNEEIFGLDPRDDILQRVVRWQLARRQQGSHKAQGRGDVSRTGSKMYKQKGTGRARHHSARAPQFRGGGQAHGPVVRNHDHDLPKKVRALGLRHALSAKAKASDLIIIDDLASADAKTKQLVSQFAKLGLENALLIGGAEIDANFQRAASNIPNIDVLPVQGINVYDILRRGKLVLSKAAVEALEERFK</sequence>
<reference key="1">
    <citation type="journal article" date="2009" name="PLoS ONE">
        <title>Genome degradation in Brucella ovis corresponds with narrowing of its host range and tissue tropism.</title>
        <authorList>
            <person name="Tsolis R.M."/>
            <person name="Seshadri R."/>
            <person name="Santos R.L."/>
            <person name="Sangari F.J."/>
            <person name="Lobo J.M."/>
            <person name="de Jong M.F."/>
            <person name="Ren Q."/>
            <person name="Myers G."/>
            <person name="Brinkac L.M."/>
            <person name="Nelson W.C."/>
            <person name="Deboy R.T."/>
            <person name="Angiuoli S."/>
            <person name="Khouri H."/>
            <person name="Dimitrov G."/>
            <person name="Robinson J.R."/>
            <person name="Mulligan S."/>
            <person name="Walker R.L."/>
            <person name="Elzer P.E."/>
            <person name="Hassan K.A."/>
            <person name="Paulsen I.T."/>
        </authorList>
    </citation>
    <scope>NUCLEOTIDE SEQUENCE [LARGE SCALE GENOMIC DNA]</scope>
    <source>
        <strain>ATCC 25840 / 63/290 / NCTC 10512</strain>
    </source>
</reference>
<accession>A5VR05</accession>
<gene>
    <name evidence="1" type="primary">rplD</name>
    <name type="ordered locus">BOV_1195</name>
</gene>